<reference key="1">
    <citation type="journal article" date="1992" name="Ann. Mo. Bot. Gard.">
        <title>Monophyly of the Asteridae and identification of their major lineages inferred from DNA sequences of rbcL.</title>
        <authorList>
            <person name="Olmstead R.G."/>
            <person name="Michaels H.J."/>
            <person name="Scott K.M."/>
            <person name="Palmer J.D."/>
        </authorList>
        <dbReference type="AGRICOLA" id="IND93014998"/>
    </citation>
    <scope>NUCLEOTIDE SEQUENCE [GENOMIC DNA]</scope>
</reference>
<sequence>DILAAFRVTPQPGVPPEEAGXAVAAESSTGTWXTVWTDGLTSLDRYKGRCYKIEPIAGEENQYIAYVAYPLDLFEEGSVTNMFTSIVGNVFGFKALXALRLEDLRIPVAYVKTFQGPXHGIQVERDKLNKYGRPLLGCTIKPKLGLSAKNYGRAVYECLRGGLDFTKDDENVNSQPFMRWRDRFLFCAEAIYKAQAETGEIKGHYLSATAGTCEEMMKRAIFARELGVPIVMHDYLTGGFTANTSLAHYCRDNGLLLHIHRAMHAVIDRQKNHGXXFRVLXKALRMSGGDHIHSGTVVGKLEGERDITLGFVDLLRDDFIEKDRSRGIYFTQDWVSLPGVLPVASGGIHVXHMPALTEIFGDDSVLQFGGGTLGHPWGNRPGAVANRVALEACVQARNEGRDLASEGNEIIREATKWSPELAAACEVWKEIKFEFQAMDTL</sequence>
<accession>Q05579</accession>
<geneLocation type="chloroplast"/>
<proteinExistence type="inferred from homology"/>
<protein>
    <recommendedName>
        <fullName evidence="1">Ribulose bisphosphate carboxylase large chain</fullName>
        <shortName evidence="1">RuBisCO large subunit</shortName>
        <ecNumber evidence="1">4.1.1.39</ecNumber>
    </recommendedName>
</protein>
<keyword id="KW-0113">Calvin cycle</keyword>
<keyword id="KW-0120">Carbon dioxide fixation</keyword>
<keyword id="KW-0150">Chloroplast</keyword>
<keyword id="KW-1015">Disulfide bond</keyword>
<keyword id="KW-0456">Lyase</keyword>
<keyword id="KW-0460">Magnesium</keyword>
<keyword id="KW-0479">Metal-binding</keyword>
<keyword id="KW-0503">Monooxygenase</keyword>
<keyword id="KW-0560">Oxidoreductase</keyword>
<keyword id="KW-0601">Photorespiration</keyword>
<keyword id="KW-0602">Photosynthesis</keyword>
<keyword id="KW-0934">Plastid</keyword>
<dbReference type="EC" id="4.1.1.39" evidence="1"/>
<dbReference type="EMBL" id="L11676">
    <property type="protein sequence ID" value="AAA84137.1"/>
    <property type="molecule type" value="Genomic_DNA"/>
</dbReference>
<dbReference type="GO" id="GO:0009507">
    <property type="term" value="C:chloroplast"/>
    <property type="evidence" value="ECO:0007669"/>
    <property type="project" value="UniProtKB-SubCell"/>
</dbReference>
<dbReference type="GO" id="GO:0000287">
    <property type="term" value="F:magnesium ion binding"/>
    <property type="evidence" value="ECO:0007669"/>
    <property type="project" value="InterPro"/>
</dbReference>
<dbReference type="GO" id="GO:0004497">
    <property type="term" value="F:monooxygenase activity"/>
    <property type="evidence" value="ECO:0007669"/>
    <property type="project" value="UniProtKB-KW"/>
</dbReference>
<dbReference type="GO" id="GO:0016984">
    <property type="term" value="F:ribulose-bisphosphate carboxylase activity"/>
    <property type="evidence" value="ECO:0007669"/>
    <property type="project" value="UniProtKB-EC"/>
</dbReference>
<dbReference type="GO" id="GO:0009853">
    <property type="term" value="P:photorespiration"/>
    <property type="evidence" value="ECO:0007669"/>
    <property type="project" value="UniProtKB-KW"/>
</dbReference>
<dbReference type="GO" id="GO:0019253">
    <property type="term" value="P:reductive pentose-phosphate cycle"/>
    <property type="evidence" value="ECO:0007669"/>
    <property type="project" value="UniProtKB-KW"/>
</dbReference>
<dbReference type="CDD" id="cd08212">
    <property type="entry name" value="RuBisCO_large_I"/>
    <property type="match status" value="1"/>
</dbReference>
<dbReference type="FunFam" id="3.20.20.110:FF:000001">
    <property type="entry name" value="Ribulose bisphosphate carboxylase large chain"/>
    <property type="match status" value="1"/>
</dbReference>
<dbReference type="Gene3D" id="3.20.20.110">
    <property type="entry name" value="Ribulose bisphosphate carboxylase, large subunit, C-terminal domain"/>
    <property type="match status" value="1"/>
</dbReference>
<dbReference type="Gene3D" id="3.30.70.150">
    <property type="entry name" value="RuBisCO large subunit, N-terminal domain"/>
    <property type="match status" value="1"/>
</dbReference>
<dbReference type="HAMAP" id="MF_01338">
    <property type="entry name" value="RuBisCO_L_type1"/>
    <property type="match status" value="1"/>
</dbReference>
<dbReference type="InterPro" id="IPR033966">
    <property type="entry name" value="RuBisCO"/>
</dbReference>
<dbReference type="InterPro" id="IPR020878">
    <property type="entry name" value="RuBisCo_large_chain_AS"/>
</dbReference>
<dbReference type="InterPro" id="IPR000685">
    <property type="entry name" value="RuBisCO_lsu_C"/>
</dbReference>
<dbReference type="InterPro" id="IPR036376">
    <property type="entry name" value="RuBisCO_lsu_C_sf"/>
</dbReference>
<dbReference type="InterPro" id="IPR017443">
    <property type="entry name" value="RuBisCO_lsu_fd_N"/>
</dbReference>
<dbReference type="InterPro" id="IPR036422">
    <property type="entry name" value="RuBisCO_lsu_N_sf"/>
</dbReference>
<dbReference type="InterPro" id="IPR020888">
    <property type="entry name" value="RuBisCO_lsuI"/>
</dbReference>
<dbReference type="NCBIfam" id="NF003252">
    <property type="entry name" value="PRK04208.1"/>
    <property type="match status" value="1"/>
</dbReference>
<dbReference type="PANTHER" id="PTHR42704">
    <property type="entry name" value="RIBULOSE BISPHOSPHATE CARBOXYLASE"/>
    <property type="match status" value="1"/>
</dbReference>
<dbReference type="PANTHER" id="PTHR42704:SF15">
    <property type="entry name" value="RIBULOSE BISPHOSPHATE CARBOXYLASE LARGE CHAIN"/>
    <property type="match status" value="1"/>
</dbReference>
<dbReference type="Pfam" id="PF00016">
    <property type="entry name" value="RuBisCO_large"/>
    <property type="match status" value="1"/>
</dbReference>
<dbReference type="Pfam" id="PF02788">
    <property type="entry name" value="RuBisCO_large_N"/>
    <property type="match status" value="1"/>
</dbReference>
<dbReference type="SFLD" id="SFLDG01052">
    <property type="entry name" value="RuBisCO"/>
    <property type="match status" value="1"/>
</dbReference>
<dbReference type="SFLD" id="SFLDS00014">
    <property type="entry name" value="RuBisCO"/>
    <property type="match status" value="1"/>
</dbReference>
<dbReference type="SFLD" id="SFLDG00301">
    <property type="entry name" value="RuBisCO-like_proteins"/>
    <property type="match status" value="1"/>
</dbReference>
<dbReference type="SUPFAM" id="SSF51649">
    <property type="entry name" value="RuBisCo, C-terminal domain"/>
    <property type="match status" value="1"/>
</dbReference>
<dbReference type="SUPFAM" id="SSF54966">
    <property type="entry name" value="RuBisCO, large subunit, small (N-terminal) domain"/>
    <property type="match status" value="1"/>
</dbReference>
<dbReference type="PROSITE" id="PS00157">
    <property type="entry name" value="RUBISCO_LARGE"/>
    <property type="match status" value="1"/>
</dbReference>
<organism>
    <name type="scientific">Coriandrum sativum</name>
    <name type="common">Coriander</name>
    <name type="synonym">Chinese parsley</name>
    <dbReference type="NCBI Taxonomy" id="4047"/>
    <lineage>
        <taxon>Eukaryota</taxon>
        <taxon>Viridiplantae</taxon>
        <taxon>Streptophyta</taxon>
        <taxon>Embryophyta</taxon>
        <taxon>Tracheophyta</taxon>
        <taxon>Spermatophyta</taxon>
        <taxon>Magnoliopsida</taxon>
        <taxon>eudicotyledons</taxon>
        <taxon>Gunneridae</taxon>
        <taxon>Pentapetalae</taxon>
        <taxon>asterids</taxon>
        <taxon>campanulids</taxon>
        <taxon>Apiales</taxon>
        <taxon>Apiaceae</taxon>
        <taxon>Apioideae</taxon>
        <taxon>apioid superclade</taxon>
        <taxon>Coriandreae</taxon>
        <taxon>Coriandrum</taxon>
    </lineage>
</organism>
<feature type="chain" id="PRO_0000062424" description="Ribulose bisphosphate carboxylase large chain">
    <location>
        <begin position="1" status="less than"/>
        <end position="441"/>
    </location>
</feature>
<feature type="active site" description="Proton acceptor" evidence="1">
    <location>
        <position position="141"/>
    </location>
</feature>
<feature type="active site" description="Proton acceptor" evidence="1">
    <location>
        <position position="260"/>
    </location>
</feature>
<feature type="binding site" description="in homodimeric partner" evidence="1">
    <location>
        <position position="89"/>
    </location>
    <ligand>
        <name>substrate</name>
    </ligand>
</feature>
<feature type="binding site" evidence="1">
    <location>
        <position position="139"/>
    </location>
    <ligand>
        <name>substrate</name>
    </ligand>
</feature>
<feature type="binding site" evidence="1">
    <location>
        <position position="143"/>
    </location>
    <ligand>
        <name>substrate</name>
    </ligand>
</feature>
<feature type="binding site" description="via carbamate group" evidence="1">
    <location>
        <position position="167"/>
    </location>
    <ligand>
        <name>Mg(2+)</name>
        <dbReference type="ChEBI" id="CHEBI:18420"/>
    </ligand>
</feature>
<feature type="binding site" evidence="1">
    <location>
        <position position="169"/>
    </location>
    <ligand>
        <name>Mg(2+)</name>
        <dbReference type="ChEBI" id="CHEBI:18420"/>
    </ligand>
</feature>
<feature type="binding site" evidence="1">
    <location>
        <position position="170"/>
    </location>
    <ligand>
        <name>Mg(2+)</name>
        <dbReference type="ChEBI" id="CHEBI:18420"/>
    </ligand>
</feature>
<feature type="binding site" evidence="1">
    <location>
        <position position="261"/>
    </location>
    <ligand>
        <name>substrate</name>
    </ligand>
</feature>
<feature type="binding site" evidence="1">
    <location>
        <position position="293"/>
    </location>
    <ligand>
        <name>substrate</name>
    </ligand>
</feature>
<feature type="binding site" evidence="1">
    <location>
        <position position="345"/>
    </location>
    <ligand>
        <name>substrate</name>
    </ligand>
</feature>
<feature type="site" description="Transition state stabilizer" evidence="1">
    <location>
        <position position="300"/>
    </location>
</feature>
<feature type="modified residue" description="N6-carboxylysine" evidence="1">
    <location>
        <position position="167"/>
    </location>
</feature>
<feature type="disulfide bond" description="Interchain; in linked form" evidence="1">
    <location>
        <position position="213"/>
    </location>
</feature>
<feature type="non-terminal residue">
    <location>
        <position position="1"/>
    </location>
</feature>
<name>RBL_CORSA</name>
<evidence type="ECO:0000255" key="1">
    <source>
        <dbReference type="HAMAP-Rule" id="MF_01338"/>
    </source>
</evidence>
<gene>
    <name evidence="1" type="primary">rbcL</name>
</gene>
<comment type="function">
    <text evidence="1">RuBisCO catalyzes two reactions: the carboxylation of D-ribulose 1,5-bisphosphate, the primary event in carbon dioxide fixation, as well as the oxidative fragmentation of the pentose substrate in the photorespiration process. Both reactions occur simultaneously and in competition at the same active site.</text>
</comment>
<comment type="catalytic activity">
    <reaction evidence="1">
        <text>2 (2R)-3-phosphoglycerate + 2 H(+) = D-ribulose 1,5-bisphosphate + CO2 + H2O</text>
        <dbReference type="Rhea" id="RHEA:23124"/>
        <dbReference type="ChEBI" id="CHEBI:15377"/>
        <dbReference type="ChEBI" id="CHEBI:15378"/>
        <dbReference type="ChEBI" id="CHEBI:16526"/>
        <dbReference type="ChEBI" id="CHEBI:57870"/>
        <dbReference type="ChEBI" id="CHEBI:58272"/>
        <dbReference type="EC" id="4.1.1.39"/>
    </reaction>
</comment>
<comment type="catalytic activity">
    <reaction evidence="1">
        <text>D-ribulose 1,5-bisphosphate + O2 = 2-phosphoglycolate + (2R)-3-phosphoglycerate + 2 H(+)</text>
        <dbReference type="Rhea" id="RHEA:36631"/>
        <dbReference type="ChEBI" id="CHEBI:15378"/>
        <dbReference type="ChEBI" id="CHEBI:15379"/>
        <dbReference type="ChEBI" id="CHEBI:57870"/>
        <dbReference type="ChEBI" id="CHEBI:58033"/>
        <dbReference type="ChEBI" id="CHEBI:58272"/>
    </reaction>
</comment>
<comment type="cofactor">
    <cofactor evidence="1">
        <name>Mg(2+)</name>
        <dbReference type="ChEBI" id="CHEBI:18420"/>
    </cofactor>
    <text evidence="1">Binds 1 Mg(2+) ion per subunit.</text>
</comment>
<comment type="subunit">
    <text evidence="1">Heterohexadecamer of 8 large chains and 8 small chains; disulfide-linked. The disulfide link is formed within the large subunit homodimers.</text>
</comment>
<comment type="subcellular location">
    <subcellularLocation>
        <location>Plastid</location>
        <location>Chloroplast</location>
    </subcellularLocation>
</comment>
<comment type="PTM">
    <text evidence="1">The disulfide bond which can form in the large chain dimeric partners within the hexadecamer appears to be associated with oxidative stress and protein turnover.</text>
</comment>
<comment type="miscellaneous">
    <text evidence="1">The basic functional RuBisCO is composed of a large chain homodimer in a 'head-to-tail' conformation. In form I RuBisCO this homodimer is arranged in a barrel-like tetramer with the small subunits forming a tetrameric 'cap' on each end of the 'barrel'.</text>
</comment>
<comment type="similarity">
    <text evidence="1">Belongs to the RuBisCO large chain family. Type I subfamily.</text>
</comment>